<name>RLMKL_PASMU</name>
<accession>Q9CNW9</accession>
<feature type="chain" id="PRO_0000366778" description="Ribosomal RNA large subunit methyltransferase K/L">
    <location>
        <begin position="1"/>
        <end position="719"/>
    </location>
</feature>
<feature type="domain" description="THUMP" evidence="1">
    <location>
        <begin position="43"/>
        <end position="154"/>
    </location>
</feature>
<reference key="1">
    <citation type="journal article" date="2001" name="Proc. Natl. Acad. Sci. U.S.A.">
        <title>Complete genomic sequence of Pasteurella multocida Pm70.</title>
        <authorList>
            <person name="May B.J."/>
            <person name="Zhang Q."/>
            <person name="Li L.L."/>
            <person name="Paustian M.L."/>
            <person name="Whittam T.S."/>
            <person name="Kapur V."/>
        </authorList>
    </citation>
    <scope>NUCLEOTIDE SEQUENCE [LARGE SCALE GENOMIC DNA]</scope>
    <source>
        <strain>Pm70</strain>
    </source>
</reference>
<evidence type="ECO:0000255" key="1">
    <source>
        <dbReference type="HAMAP-Rule" id="MF_01858"/>
    </source>
</evidence>
<proteinExistence type="inferred from homology"/>
<dbReference type="EC" id="2.1.1.173" evidence="1"/>
<dbReference type="EC" id="2.1.1.264" evidence="1"/>
<dbReference type="EMBL" id="AE004439">
    <property type="protein sequence ID" value="AAK02388.1"/>
    <property type="molecule type" value="Genomic_DNA"/>
</dbReference>
<dbReference type="SMR" id="Q9CNW9"/>
<dbReference type="STRING" id="272843.PM0304"/>
<dbReference type="EnsemblBacteria" id="AAK02388">
    <property type="protein sequence ID" value="AAK02388"/>
    <property type="gene ID" value="PM0304"/>
</dbReference>
<dbReference type="KEGG" id="pmu:PM0304"/>
<dbReference type="PATRIC" id="fig|272843.6.peg.316"/>
<dbReference type="HOGENOM" id="CLU_014042_2_0_6"/>
<dbReference type="OrthoDB" id="9809404at2"/>
<dbReference type="Proteomes" id="UP000000809">
    <property type="component" value="Chromosome"/>
</dbReference>
<dbReference type="GO" id="GO:0005737">
    <property type="term" value="C:cytoplasm"/>
    <property type="evidence" value="ECO:0007669"/>
    <property type="project" value="UniProtKB-SubCell"/>
</dbReference>
<dbReference type="GO" id="GO:0052915">
    <property type="term" value="F:23S rRNA (guanine(2445)-N(2))-methyltransferase activity"/>
    <property type="evidence" value="ECO:0007669"/>
    <property type="project" value="UniProtKB-UniRule"/>
</dbReference>
<dbReference type="GO" id="GO:0003723">
    <property type="term" value="F:RNA binding"/>
    <property type="evidence" value="ECO:0007669"/>
    <property type="project" value="UniProtKB-KW"/>
</dbReference>
<dbReference type="GO" id="GO:0070043">
    <property type="term" value="F:rRNA (guanine-N7-)-methyltransferase activity"/>
    <property type="evidence" value="ECO:0007669"/>
    <property type="project" value="UniProtKB-UniRule"/>
</dbReference>
<dbReference type="CDD" id="cd02440">
    <property type="entry name" value="AdoMet_MTases"/>
    <property type="match status" value="2"/>
</dbReference>
<dbReference type="CDD" id="cd11715">
    <property type="entry name" value="THUMP_AdoMetMT"/>
    <property type="match status" value="1"/>
</dbReference>
<dbReference type="FunFam" id="3.30.750.80:FF:000001">
    <property type="entry name" value="Ribosomal RNA large subunit methyltransferase K/L"/>
    <property type="match status" value="1"/>
</dbReference>
<dbReference type="FunFam" id="3.40.50.150:FF:000039">
    <property type="entry name" value="Ribosomal RNA large subunit methyltransferase K/L"/>
    <property type="match status" value="1"/>
</dbReference>
<dbReference type="Gene3D" id="3.30.2130.30">
    <property type="match status" value="1"/>
</dbReference>
<dbReference type="Gene3D" id="3.30.750.80">
    <property type="entry name" value="RNA methyltransferase domain (HRMD) like"/>
    <property type="match status" value="1"/>
</dbReference>
<dbReference type="Gene3D" id="3.40.50.150">
    <property type="entry name" value="Vaccinia Virus protein VP39"/>
    <property type="match status" value="2"/>
</dbReference>
<dbReference type="HAMAP" id="MF_01858">
    <property type="entry name" value="23SrRNA_methyltr_KL"/>
    <property type="match status" value="1"/>
</dbReference>
<dbReference type="InterPro" id="IPR017244">
    <property type="entry name" value="23SrRNA_methyltr_KL"/>
</dbReference>
<dbReference type="InterPro" id="IPR002052">
    <property type="entry name" value="DNA_methylase_N6_adenine_CS"/>
</dbReference>
<dbReference type="InterPro" id="IPR000241">
    <property type="entry name" value="RlmKL-like_Mtase"/>
</dbReference>
<dbReference type="InterPro" id="IPR053943">
    <property type="entry name" value="RlmKL-like_Mtase_CS"/>
</dbReference>
<dbReference type="InterPro" id="IPR054170">
    <property type="entry name" value="RlmL_1st"/>
</dbReference>
<dbReference type="InterPro" id="IPR019614">
    <property type="entry name" value="SAM-dep_methyl-trfase"/>
</dbReference>
<dbReference type="InterPro" id="IPR029063">
    <property type="entry name" value="SAM-dependent_MTases_sf"/>
</dbReference>
<dbReference type="InterPro" id="IPR004114">
    <property type="entry name" value="THUMP_dom"/>
</dbReference>
<dbReference type="NCBIfam" id="NF008748">
    <property type="entry name" value="PRK11783.1"/>
    <property type="match status" value="1"/>
</dbReference>
<dbReference type="PANTHER" id="PTHR47313">
    <property type="entry name" value="RIBOSOMAL RNA LARGE SUBUNIT METHYLTRANSFERASE K/L"/>
    <property type="match status" value="1"/>
</dbReference>
<dbReference type="PANTHER" id="PTHR47313:SF1">
    <property type="entry name" value="RIBOSOMAL RNA LARGE SUBUNIT METHYLTRANSFERASE K_L"/>
    <property type="match status" value="1"/>
</dbReference>
<dbReference type="Pfam" id="PF10672">
    <property type="entry name" value="Methyltrans_SAM"/>
    <property type="match status" value="1"/>
</dbReference>
<dbReference type="Pfam" id="PF22020">
    <property type="entry name" value="RlmL_1st"/>
    <property type="match status" value="1"/>
</dbReference>
<dbReference type="Pfam" id="PF02926">
    <property type="entry name" value="THUMP"/>
    <property type="match status" value="1"/>
</dbReference>
<dbReference type="Pfam" id="PF01170">
    <property type="entry name" value="UPF0020"/>
    <property type="match status" value="1"/>
</dbReference>
<dbReference type="PIRSF" id="PIRSF037618">
    <property type="entry name" value="RNA_Mtase_bacteria_prd"/>
    <property type="match status" value="1"/>
</dbReference>
<dbReference type="SMART" id="SM00981">
    <property type="entry name" value="THUMP"/>
    <property type="match status" value="1"/>
</dbReference>
<dbReference type="SUPFAM" id="SSF53335">
    <property type="entry name" value="S-adenosyl-L-methionine-dependent methyltransferases"/>
    <property type="match status" value="2"/>
</dbReference>
<dbReference type="PROSITE" id="PS51165">
    <property type="entry name" value="THUMP"/>
    <property type="match status" value="1"/>
</dbReference>
<dbReference type="PROSITE" id="PS01261">
    <property type="entry name" value="UPF0020"/>
    <property type="match status" value="1"/>
</dbReference>
<organism>
    <name type="scientific">Pasteurella multocida (strain Pm70)</name>
    <dbReference type="NCBI Taxonomy" id="272843"/>
    <lineage>
        <taxon>Bacteria</taxon>
        <taxon>Pseudomonadati</taxon>
        <taxon>Pseudomonadota</taxon>
        <taxon>Gammaproteobacteria</taxon>
        <taxon>Pasteurellales</taxon>
        <taxon>Pasteurellaceae</taxon>
        <taxon>Pasteurella</taxon>
    </lineage>
</organism>
<comment type="function">
    <text evidence="1">Specifically methylates the guanine in position 2445 (m2G2445) and the guanine in position 2069 (m7G2069) of 23S rRNA.</text>
</comment>
<comment type="catalytic activity">
    <reaction evidence="1">
        <text>guanosine(2445) in 23S rRNA + S-adenosyl-L-methionine = N(2)-methylguanosine(2445) in 23S rRNA + S-adenosyl-L-homocysteine + H(+)</text>
        <dbReference type="Rhea" id="RHEA:42740"/>
        <dbReference type="Rhea" id="RHEA-COMP:10215"/>
        <dbReference type="Rhea" id="RHEA-COMP:10216"/>
        <dbReference type="ChEBI" id="CHEBI:15378"/>
        <dbReference type="ChEBI" id="CHEBI:57856"/>
        <dbReference type="ChEBI" id="CHEBI:59789"/>
        <dbReference type="ChEBI" id="CHEBI:74269"/>
        <dbReference type="ChEBI" id="CHEBI:74481"/>
        <dbReference type="EC" id="2.1.1.173"/>
    </reaction>
</comment>
<comment type="catalytic activity">
    <reaction evidence="1">
        <text>guanosine(2069) in 23S rRNA + S-adenosyl-L-methionine = N(2)-methylguanosine(2069) in 23S rRNA + S-adenosyl-L-homocysteine + H(+)</text>
        <dbReference type="Rhea" id="RHEA:43772"/>
        <dbReference type="Rhea" id="RHEA-COMP:10688"/>
        <dbReference type="Rhea" id="RHEA-COMP:10689"/>
        <dbReference type="ChEBI" id="CHEBI:15378"/>
        <dbReference type="ChEBI" id="CHEBI:57856"/>
        <dbReference type="ChEBI" id="CHEBI:59789"/>
        <dbReference type="ChEBI" id="CHEBI:74269"/>
        <dbReference type="ChEBI" id="CHEBI:74481"/>
        <dbReference type="EC" id="2.1.1.264"/>
    </reaction>
</comment>
<comment type="subcellular location">
    <subcellularLocation>
        <location evidence="1">Cytoplasm</location>
    </subcellularLocation>
</comment>
<comment type="similarity">
    <text evidence="1">Belongs to the methyltransferase superfamily. RlmKL family.</text>
</comment>
<sequence length="719" mass="81746">MKQLFATTARGFEELLKVELTDLGAMDCQITQGGVHFHADEETQYRVLLWTRLASRILLPIVTCKVYSDLDLYSAVVGQNWLDYFDEKAHFMVDFNGTNREIRHTQFGAMRVKDGIVDYFERVGKPRPNVDKSQPDIRIHAYLNREELVISLDLSGDALHMRGYREDTGKAPLRETLAAAIVLRSGWQLGTPLMDPMCGSGTLLIEAAQMQANIAPQLHRLHWGFDFWKGHNQQAWDKVKGEAIELAEQTFNQNQKANFYGCDLDHRVLQKAKRNAQNAGVAHLIQWQQGDVAALKNPFVEAKGTVICNPPYGERLGTTPALIALYSVFGQRLKQQFADWNVSIFSGEPALLDCLRLRSHRQFKAKNGPLDCVQKNYHISARATASDENTQNSPEIDRTLTSSQVAVDFANRLQKNSKKIEKWAKQQGINAYRLYDADLPEYNLAVDRYDDHIVVQEYAAPKNIDENKARQRLLDAVTATLQVTGVETNKLILKVRQKQKGTNQYEKLANKGDYFYVNEYGAKLWVNLTDYLDTGLFLDHRLTRKMLGEMAKGKDVLNLFAYTGSATVHMALGGAKSTTTVDMSNTYLNWAEQNLLLNDLEGKQHKLIQADCLQWLARCDRQFDLIFVDPPTFSNSKRMEDSWDVQRDHIKLMTQLKRILRPNGTIVFSNNKRGFKMDVEGLAALGLSAVEISAKTLPLDFERNKQIHNCWVVRLKADL</sequence>
<keyword id="KW-0963">Cytoplasm</keyword>
<keyword id="KW-0489">Methyltransferase</keyword>
<keyword id="KW-1185">Reference proteome</keyword>
<keyword id="KW-0694">RNA-binding</keyword>
<keyword id="KW-0698">rRNA processing</keyword>
<keyword id="KW-0949">S-adenosyl-L-methionine</keyword>
<keyword id="KW-0808">Transferase</keyword>
<gene>
    <name evidence="1" type="primary">rlmL</name>
    <name type="ordered locus">PM0304</name>
</gene>
<protein>
    <recommendedName>
        <fullName evidence="1">Ribosomal RNA large subunit methyltransferase K/L</fullName>
    </recommendedName>
    <domain>
        <recommendedName>
            <fullName evidence="1">23S rRNA m2G2445 methyltransferase</fullName>
            <ecNumber evidence="1">2.1.1.173</ecNumber>
        </recommendedName>
        <alternativeName>
            <fullName evidence="1">rRNA (guanine-N(2)-)-methyltransferase RlmL</fullName>
        </alternativeName>
    </domain>
    <domain>
        <recommendedName>
            <fullName evidence="1">23S rRNA m7G2069 methyltransferase</fullName>
            <ecNumber evidence="1">2.1.1.264</ecNumber>
        </recommendedName>
        <alternativeName>
            <fullName evidence="1">rRNA (guanine-N(7)-)-methyltransferase RlmK</fullName>
        </alternativeName>
    </domain>
</protein>